<comment type="function">
    <text>May act as a neurotransmitter or neuromodulator.</text>
</comment>
<comment type="subcellular location">
    <subcellularLocation>
        <location>Secreted</location>
    </subcellularLocation>
</comment>
<comment type="similarity">
    <text evidence="2">Belongs to the allatostatin family.</text>
</comment>
<proteinExistence type="evidence at protein level"/>
<keyword id="KW-0027">Amidation</keyword>
<keyword id="KW-0903">Direct protein sequencing</keyword>
<keyword id="KW-0527">Neuropeptide</keyword>
<keyword id="KW-0964">Secreted</keyword>
<dbReference type="GO" id="GO:0005576">
    <property type="term" value="C:extracellular region"/>
    <property type="evidence" value="ECO:0007669"/>
    <property type="project" value="UniProtKB-SubCell"/>
</dbReference>
<dbReference type="GO" id="GO:0007218">
    <property type="term" value="P:neuropeptide signaling pathway"/>
    <property type="evidence" value="ECO:0007669"/>
    <property type="project" value="UniProtKB-KW"/>
</dbReference>
<reference key="1">
    <citation type="journal article" date="1997" name="Eur. J. Biochem.">
        <title>Isolation and identification of multiple neuropeptides of the allatostatin superfamily in the shore crab Carcinus maenas.</title>
        <authorList>
            <person name="Duve H."/>
            <person name="Johnsen A.H."/>
            <person name="Maestro J.-L."/>
            <person name="Scott A.G."/>
            <person name="Jaros P.P."/>
            <person name="Thorpe A."/>
        </authorList>
    </citation>
    <scope>PROTEIN SEQUENCE</scope>
    <scope>AMIDATION AT LEU-8</scope>
    <source>
        <tissue>Cerebral ganglion</tissue>
        <tissue>Thoracic ganglion</tissue>
    </source>
</reference>
<sequence>ASPYAFGL</sequence>
<feature type="peptide" id="PRO_0000001181" description="Carcinustatin-7">
    <location>
        <begin position="1"/>
        <end position="8"/>
    </location>
</feature>
<feature type="peptide" id="PRO_0000001182" description="Carcinustatin-6">
    <location>
        <begin position="2"/>
        <end position="8"/>
    </location>
</feature>
<feature type="peptide" id="PRO_0000001183" description="Carcinustatin-1">
    <location>
        <begin position="4"/>
        <end position="8"/>
    </location>
</feature>
<feature type="modified residue" description="Leucine amide" evidence="1">
    <location>
        <position position="8"/>
    </location>
</feature>
<accession>P81809</accession>
<accession>P81804</accession>
<accession>P81810</accession>
<protein>
    <recommendedName>
        <fullName>Carcinustatin-7</fullName>
    </recommendedName>
    <component>
        <recommendedName>
            <fullName>Carcinustatin-6</fullName>
        </recommendedName>
    </component>
    <component>
        <recommendedName>
            <fullName>Carcinustatin-1</fullName>
        </recommendedName>
    </component>
</protein>
<name>ALL7_CARMA</name>
<organism>
    <name type="scientific">Carcinus maenas</name>
    <name type="common">Common shore crab</name>
    <name type="synonym">Green crab</name>
    <dbReference type="NCBI Taxonomy" id="6759"/>
    <lineage>
        <taxon>Eukaryota</taxon>
        <taxon>Metazoa</taxon>
        <taxon>Ecdysozoa</taxon>
        <taxon>Arthropoda</taxon>
        <taxon>Crustacea</taxon>
        <taxon>Multicrustacea</taxon>
        <taxon>Malacostraca</taxon>
        <taxon>Eumalacostraca</taxon>
        <taxon>Eucarida</taxon>
        <taxon>Decapoda</taxon>
        <taxon>Pleocyemata</taxon>
        <taxon>Brachyura</taxon>
        <taxon>Eubrachyura</taxon>
        <taxon>Portunoidea</taxon>
        <taxon>Carcinidae</taxon>
        <taxon>Carcinus</taxon>
    </lineage>
</organism>
<evidence type="ECO:0000269" key="1">
    <source>
    </source>
</evidence>
<evidence type="ECO:0000305" key="2"/>